<comment type="function">
    <text evidence="1">Component of the 90S pre-ribosome involved in the maturation of rRNAs. Required for early cleavages of the pre-RNAs in the 40S ribosomal subunit maturation pathway (By similarity).</text>
</comment>
<comment type="subunit">
    <text evidence="1">Associates with 90S and pre-40S pre-ribosomal particles.</text>
</comment>
<comment type="subcellular location">
    <subcellularLocation>
        <location evidence="1">Nucleus</location>
        <location evidence="1">Nucleolus</location>
    </subcellularLocation>
</comment>
<comment type="similarity">
    <text evidence="4">Belongs to the RRP36 family.</text>
</comment>
<accession>C1GXI3</accession>
<organism>
    <name type="scientific">Paracoccidioides lutzii (strain ATCC MYA-826 / Pb01)</name>
    <name type="common">Paracoccidioides brasiliensis</name>
    <dbReference type="NCBI Taxonomy" id="502779"/>
    <lineage>
        <taxon>Eukaryota</taxon>
        <taxon>Fungi</taxon>
        <taxon>Dikarya</taxon>
        <taxon>Ascomycota</taxon>
        <taxon>Pezizomycotina</taxon>
        <taxon>Eurotiomycetes</taxon>
        <taxon>Eurotiomycetidae</taxon>
        <taxon>Onygenales</taxon>
        <taxon>Ajellomycetaceae</taxon>
        <taxon>Paracoccidioides</taxon>
    </lineage>
</organism>
<name>RRP36_PARBA</name>
<keyword id="KW-0175">Coiled coil</keyword>
<keyword id="KW-0539">Nucleus</keyword>
<keyword id="KW-1185">Reference proteome</keyword>
<keyword id="KW-0687">Ribonucleoprotein</keyword>
<keyword id="KW-0690">Ribosome biogenesis</keyword>
<keyword id="KW-0698">rRNA processing</keyword>
<reference key="1">
    <citation type="journal article" date="2011" name="PLoS Genet.">
        <title>Comparative genomic analysis of human fungal pathogens causing paracoccidioidomycosis.</title>
        <authorList>
            <person name="Desjardins C.A."/>
            <person name="Champion M.D."/>
            <person name="Holder J.W."/>
            <person name="Muszewska A."/>
            <person name="Goldberg J."/>
            <person name="Bailao A.M."/>
            <person name="Brigido M.M."/>
            <person name="Ferreira M.E."/>
            <person name="Garcia A.M."/>
            <person name="Grynberg M."/>
            <person name="Gujja S."/>
            <person name="Heiman D.I."/>
            <person name="Henn M.R."/>
            <person name="Kodira C.D."/>
            <person name="Leon-Narvaez H."/>
            <person name="Longo L.V.G."/>
            <person name="Ma L.-J."/>
            <person name="Malavazi I."/>
            <person name="Matsuo A.L."/>
            <person name="Morais F.V."/>
            <person name="Pereira M."/>
            <person name="Rodriguez-Brito S."/>
            <person name="Sakthikumar S."/>
            <person name="Salem-Izacc S.M."/>
            <person name="Sykes S.M."/>
            <person name="Teixeira M.M."/>
            <person name="Vallejo M.C."/>
            <person name="Walter M.E."/>
            <person name="Yandava C."/>
            <person name="Young S."/>
            <person name="Zeng Q."/>
            <person name="Zucker J."/>
            <person name="Felipe M.S."/>
            <person name="Goldman G.H."/>
            <person name="Haas B.J."/>
            <person name="McEwen J.G."/>
            <person name="Nino-Vega G."/>
            <person name="Puccia R."/>
            <person name="San-Blas G."/>
            <person name="Soares C.M."/>
            <person name="Birren B.W."/>
            <person name="Cuomo C.A."/>
        </authorList>
    </citation>
    <scope>NUCLEOTIDE SEQUENCE [LARGE SCALE GENOMIC DNA]</scope>
    <source>
        <strain>ATCC MYA-826 / Pb01</strain>
    </source>
</reference>
<gene>
    <name type="primary">RRP36</name>
    <name type="ORF">PAAG_03557</name>
</gene>
<sequence length="344" mass="39097">MPILSKLNKRVRARVEEDDFEHFSLESASDGSELGEEDEEETDDSDGSGSDSDDGGGRDGDESENEDLESDSASSDANSDITSSLNNISFGALAKAQASLGKRKRSTTLTADIASKRRKSPTRSPPAPSSKEDQKYPNATRPPQKLSHRTSKHAPTIQSSRHAVTRKRTVIKPPAIPQARDPRFDSVVLNHSTNGNPSIATNATIHANKNYAFLNSYRTEELSQLRKRLQTLQQEKSKDTHDEREIERLKRQITSMSDRMRTFERKEMEREVLAGHRRKEREAIREGKKSQPWFLKKGDVKREVVTRRFTEMSGKEKQRALERRRKKVASKEKKEMPWARRGVE</sequence>
<proteinExistence type="inferred from homology"/>
<protein>
    <recommendedName>
        <fullName>rRNA biogenesis protein RRP36</fullName>
    </recommendedName>
    <alternativeName>
        <fullName>Ribosomal RNA-processing protein 36</fullName>
    </alternativeName>
</protein>
<dbReference type="EMBL" id="KN293998">
    <property type="protein sequence ID" value="EEH41271.1"/>
    <property type="molecule type" value="Genomic_DNA"/>
</dbReference>
<dbReference type="RefSeq" id="XP_002795012.1">
    <property type="nucleotide sequence ID" value="XM_002794966.2"/>
</dbReference>
<dbReference type="SMR" id="C1GXI3"/>
<dbReference type="STRING" id="502779.C1GXI3"/>
<dbReference type="GeneID" id="9098353"/>
<dbReference type="KEGG" id="pbl:PAAG_03557"/>
<dbReference type="VEuPathDB" id="FungiDB:PAAG_03557"/>
<dbReference type="eggNOG" id="KOG3190">
    <property type="taxonomic scope" value="Eukaryota"/>
</dbReference>
<dbReference type="HOGENOM" id="CLU_048802_0_0_1"/>
<dbReference type="OMA" id="ERKEMPW"/>
<dbReference type="OrthoDB" id="448446at2759"/>
<dbReference type="Proteomes" id="UP000002059">
    <property type="component" value="Partially assembled WGS sequence"/>
</dbReference>
<dbReference type="GO" id="GO:0030686">
    <property type="term" value="C:90S preribosome"/>
    <property type="evidence" value="ECO:0007669"/>
    <property type="project" value="TreeGrafter"/>
</dbReference>
<dbReference type="GO" id="GO:0005730">
    <property type="term" value="C:nucleolus"/>
    <property type="evidence" value="ECO:0007669"/>
    <property type="project" value="UniProtKB-SubCell"/>
</dbReference>
<dbReference type="GO" id="GO:0000462">
    <property type="term" value="P:maturation of SSU-rRNA from tricistronic rRNA transcript (SSU-rRNA, 5.8S rRNA, LSU-rRNA)"/>
    <property type="evidence" value="ECO:0007669"/>
    <property type="project" value="TreeGrafter"/>
</dbReference>
<dbReference type="InterPro" id="IPR009292">
    <property type="entry name" value="RRP36"/>
</dbReference>
<dbReference type="PANTHER" id="PTHR21738">
    <property type="entry name" value="RIBOSOMAL RNA PROCESSING PROTEIN 36 HOMOLOG"/>
    <property type="match status" value="1"/>
</dbReference>
<dbReference type="PANTHER" id="PTHR21738:SF0">
    <property type="entry name" value="RIBOSOMAL RNA PROCESSING PROTEIN 36 HOMOLOG"/>
    <property type="match status" value="1"/>
</dbReference>
<dbReference type="Pfam" id="PF06102">
    <property type="entry name" value="RRP36"/>
    <property type="match status" value="1"/>
</dbReference>
<feature type="chain" id="PRO_0000397644" description="rRNA biogenesis protein RRP36">
    <location>
        <begin position="1"/>
        <end position="344"/>
    </location>
</feature>
<feature type="region of interest" description="Disordered" evidence="3">
    <location>
        <begin position="15"/>
        <end position="83"/>
    </location>
</feature>
<feature type="region of interest" description="Disordered" evidence="3">
    <location>
        <begin position="95"/>
        <end position="167"/>
    </location>
</feature>
<feature type="region of interest" description="Disordered" evidence="3">
    <location>
        <begin position="311"/>
        <end position="344"/>
    </location>
</feature>
<feature type="coiled-coil region" evidence="2">
    <location>
        <begin position="215"/>
        <end position="267"/>
    </location>
</feature>
<feature type="compositionally biased region" description="Acidic residues" evidence="3">
    <location>
        <begin position="33"/>
        <end position="54"/>
    </location>
</feature>
<feature type="compositionally biased region" description="Acidic residues" evidence="3">
    <location>
        <begin position="61"/>
        <end position="70"/>
    </location>
</feature>
<feature type="compositionally biased region" description="Low complexity" evidence="3">
    <location>
        <begin position="71"/>
        <end position="83"/>
    </location>
</feature>
<feature type="compositionally biased region" description="Basic and acidic residues" evidence="3">
    <location>
        <begin position="311"/>
        <end position="321"/>
    </location>
</feature>
<feature type="compositionally biased region" description="Basic and acidic residues" evidence="3">
    <location>
        <begin position="329"/>
        <end position="344"/>
    </location>
</feature>
<evidence type="ECO:0000250" key="1"/>
<evidence type="ECO:0000255" key="2"/>
<evidence type="ECO:0000256" key="3">
    <source>
        <dbReference type="SAM" id="MobiDB-lite"/>
    </source>
</evidence>
<evidence type="ECO:0000305" key="4"/>